<name>PROA_BACC7</name>
<keyword id="KW-0028">Amino-acid biosynthesis</keyword>
<keyword id="KW-0963">Cytoplasm</keyword>
<keyword id="KW-0521">NADP</keyword>
<keyword id="KW-0560">Oxidoreductase</keyword>
<keyword id="KW-0641">Proline biosynthesis</keyword>
<accession>B7HVK6</accession>
<comment type="function">
    <text evidence="1">Catalyzes the NADPH-dependent reduction of L-glutamate 5-phosphate into L-glutamate 5-semialdehyde and phosphate. The product spontaneously undergoes cyclization to form 1-pyrroline-5-carboxylate.</text>
</comment>
<comment type="catalytic activity">
    <reaction evidence="1">
        <text>L-glutamate 5-semialdehyde + phosphate + NADP(+) = L-glutamyl 5-phosphate + NADPH + H(+)</text>
        <dbReference type="Rhea" id="RHEA:19541"/>
        <dbReference type="ChEBI" id="CHEBI:15378"/>
        <dbReference type="ChEBI" id="CHEBI:43474"/>
        <dbReference type="ChEBI" id="CHEBI:57783"/>
        <dbReference type="ChEBI" id="CHEBI:58066"/>
        <dbReference type="ChEBI" id="CHEBI:58274"/>
        <dbReference type="ChEBI" id="CHEBI:58349"/>
        <dbReference type="EC" id="1.2.1.41"/>
    </reaction>
</comment>
<comment type="pathway">
    <text evidence="1">Amino-acid biosynthesis; L-proline biosynthesis; L-glutamate 5-semialdehyde from L-glutamate: step 2/2.</text>
</comment>
<comment type="subcellular location">
    <subcellularLocation>
        <location evidence="1">Cytoplasm</location>
    </subcellularLocation>
</comment>
<comment type="similarity">
    <text evidence="1">Belongs to the gamma-glutamyl phosphate reductase family.</text>
</comment>
<protein>
    <recommendedName>
        <fullName evidence="1">Gamma-glutamyl phosphate reductase</fullName>
        <shortName evidence="1">GPR</shortName>
        <ecNumber evidence="1">1.2.1.41</ecNumber>
    </recommendedName>
    <alternativeName>
        <fullName evidence="1">Glutamate-5-semialdehyde dehydrogenase</fullName>
    </alternativeName>
    <alternativeName>
        <fullName evidence="1">Glutamyl-gamma-semialdehyde dehydrogenase</fullName>
        <shortName evidence="1">GSA dehydrogenase</shortName>
    </alternativeName>
</protein>
<evidence type="ECO:0000255" key="1">
    <source>
        <dbReference type="HAMAP-Rule" id="MF_00412"/>
    </source>
</evidence>
<organism>
    <name type="scientific">Bacillus cereus (strain AH187)</name>
    <dbReference type="NCBI Taxonomy" id="405534"/>
    <lineage>
        <taxon>Bacteria</taxon>
        <taxon>Bacillati</taxon>
        <taxon>Bacillota</taxon>
        <taxon>Bacilli</taxon>
        <taxon>Bacillales</taxon>
        <taxon>Bacillaceae</taxon>
        <taxon>Bacillus</taxon>
        <taxon>Bacillus cereus group</taxon>
    </lineage>
</organism>
<proteinExistence type="inferred from homology"/>
<dbReference type="EC" id="1.2.1.41" evidence="1"/>
<dbReference type="EMBL" id="CP001177">
    <property type="protein sequence ID" value="ACJ77734.1"/>
    <property type="molecule type" value="Genomic_DNA"/>
</dbReference>
<dbReference type="SMR" id="B7HVK6"/>
<dbReference type="KEGG" id="bcr:BCAH187_A3027"/>
<dbReference type="HOGENOM" id="CLU_030231_0_0_9"/>
<dbReference type="UniPathway" id="UPA00098">
    <property type="reaction ID" value="UER00360"/>
</dbReference>
<dbReference type="Proteomes" id="UP000002214">
    <property type="component" value="Chromosome"/>
</dbReference>
<dbReference type="GO" id="GO:0005737">
    <property type="term" value="C:cytoplasm"/>
    <property type="evidence" value="ECO:0007669"/>
    <property type="project" value="UniProtKB-SubCell"/>
</dbReference>
<dbReference type="GO" id="GO:0004350">
    <property type="term" value="F:glutamate-5-semialdehyde dehydrogenase activity"/>
    <property type="evidence" value="ECO:0007669"/>
    <property type="project" value="UniProtKB-UniRule"/>
</dbReference>
<dbReference type="GO" id="GO:0050661">
    <property type="term" value="F:NADP binding"/>
    <property type="evidence" value="ECO:0007669"/>
    <property type="project" value="InterPro"/>
</dbReference>
<dbReference type="GO" id="GO:0055129">
    <property type="term" value="P:L-proline biosynthetic process"/>
    <property type="evidence" value="ECO:0007669"/>
    <property type="project" value="UniProtKB-UniRule"/>
</dbReference>
<dbReference type="CDD" id="cd07079">
    <property type="entry name" value="ALDH_F18-19_ProA-GPR"/>
    <property type="match status" value="1"/>
</dbReference>
<dbReference type="FunFam" id="3.40.309.10:FF:000006">
    <property type="entry name" value="Gamma-glutamyl phosphate reductase"/>
    <property type="match status" value="1"/>
</dbReference>
<dbReference type="Gene3D" id="3.40.605.10">
    <property type="entry name" value="Aldehyde Dehydrogenase, Chain A, domain 1"/>
    <property type="match status" value="1"/>
</dbReference>
<dbReference type="Gene3D" id="3.40.309.10">
    <property type="entry name" value="Aldehyde Dehydrogenase, Chain A, domain 2"/>
    <property type="match status" value="1"/>
</dbReference>
<dbReference type="HAMAP" id="MF_00412">
    <property type="entry name" value="ProA"/>
    <property type="match status" value="1"/>
</dbReference>
<dbReference type="InterPro" id="IPR016161">
    <property type="entry name" value="Ald_DH/histidinol_DH"/>
</dbReference>
<dbReference type="InterPro" id="IPR016163">
    <property type="entry name" value="Ald_DH_C"/>
</dbReference>
<dbReference type="InterPro" id="IPR016162">
    <property type="entry name" value="Ald_DH_N"/>
</dbReference>
<dbReference type="InterPro" id="IPR015590">
    <property type="entry name" value="Aldehyde_DH_dom"/>
</dbReference>
<dbReference type="InterPro" id="IPR020593">
    <property type="entry name" value="G-glutamylP_reductase_CS"/>
</dbReference>
<dbReference type="InterPro" id="IPR012134">
    <property type="entry name" value="Glu-5-SA_DH"/>
</dbReference>
<dbReference type="InterPro" id="IPR000965">
    <property type="entry name" value="GPR_dom"/>
</dbReference>
<dbReference type="NCBIfam" id="NF001221">
    <property type="entry name" value="PRK00197.1"/>
    <property type="match status" value="1"/>
</dbReference>
<dbReference type="NCBIfam" id="TIGR00407">
    <property type="entry name" value="proA"/>
    <property type="match status" value="1"/>
</dbReference>
<dbReference type="PANTHER" id="PTHR11063:SF8">
    <property type="entry name" value="DELTA-1-PYRROLINE-5-CARBOXYLATE SYNTHASE"/>
    <property type="match status" value="1"/>
</dbReference>
<dbReference type="PANTHER" id="PTHR11063">
    <property type="entry name" value="GLUTAMATE SEMIALDEHYDE DEHYDROGENASE"/>
    <property type="match status" value="1"/>
</dbReference>
<dbReference type="Pfam" id="PF00171">
    <property type="entry name" value="Aldedh"/>
    <property type="match status" value="1"/>
</dbReference>
<dbReference type="PIRSF" id="PIRSF000151">
    <property type="entry name" value="GPR"/>
    <property type="match status" value="1"/>
</dbReference>
<dbReference type="SUPFAM" id="SSF53720">
    <property type="entry name" value="ALDH-like"/>
    <property type="match status" value="1"/>
</dbReference>
<dbReference type="PROSITE" id="PS01223">
    <property type="entry name" value="PROA"/>
    <property type="match status" value="1"/>
</dbReference>
<feature type="chain" id="PRO_1000193568" description="Gamma-glutamyl phosphate reductase">
    <location>
        <begin position="1"/>
        <end position="415"/>
    </location>
</feature>
<sequence>MNEVLAKGKRAKEVARELVLKSTHQKNEALAAIANQLISETAYILEENKRDIEEGKAKGFSDSLLDRLMLNEQRIVDMTEGIKQLIELRDPVGECVSAWERPNGLSIQEMRVPLGVVGMIYEARPNVTVDAATICLKTGNAVILRGSSSAIHSNKAIVAVIHRALKQTSLPEESVQLIEDTTRDSAKQLFTMNDYLDVLIPRGGKQLIDTVVREASVPVLETGAGNCHIFIDETADKQMAFDIIINAKTQRPSVCNAIETIVLHENWAQQYGSELFSSLKERGVELRGDQKALAMDSSIVLASEEDWGTEFLSLTLAVKIVSSIEEAIHHINTYGSMHSEAIISENEENVSKFFVSVDAAALYHNASTRFTDGSEFGFGAEIGISTQKLHVRGPMGLPALTSTKYIIRGNGQIRK</sequence>
<gene>
    <name evidence="1" type="primary">proA</name>
    <name type="ordered locus">BCAH187_A3027</name>
</gene>
<reference key="1">
    <citation type="submission" date="2008-10" db="EMBL/GenBank/DDBJ databases">
        <title>Genome sequence of Bacillus cereus AH187.</title>
        <authorList>
            <person name="Dodson R.J."/>
            <person name="Durkin A.S."/>
            <person name="Rosovitz M.J."/>
            <person name="Rasko D.A."/>
            <person name="Kolsto A.B."/>
            <person name="Okstad O.A."/>
            <person name="Ravel J."/>
            <person name="Sutton G."/>
        </authorList>
    </citation>
    <scope>NUCLEOTIDE SEQUENCE [LARGE SCALE GENOMIC DNA]</scope>
    <source>
        <strain>AH187</strain>
    </source>
</reference>